<comment type="function">
    <text evidence="1">Catalyzes the synthesis of GMP from XMP.</text>
</comment>
<comment type="catalytic activity">
    <reaction evidence="1">
        <text>XMP + L-glutamine + ATP + H2O = GMP + L-glutamate + AMP + diphosphate + 2 H(+)</text>
        <dbReference type="Rhea" id="RHEA:11680"/>
        <dbReference type="ChEBI" id="CHEBI:15377"/>
        <dbReference type="ChEBI" id="CHEBI:15378"/>
        <dbReference type="ChEBI" id="CHEBI:29985"/>
        <dbReference type="ChEBI" id="CHEBI:30616"/>
        <dbReference type="ChEBI" id="CHEBI:33019"/>
        <dbReference type="ChEBI" id="CHEBI:57464"/>
        <dbReference type="ChEBI" id="CHEBI:58115"/>
        <dbReference type="ChEBI" id="CHEBI:58359"/>
        <dbReference type="ChEBI" id="CHEBI:456215"/>
        <dbReference type="EC" id="6.3.5.2"/>
    </reaction>
</comment>
<comment type="pathway">
    <text evidence="1">Purine metabolism; GMP biosynthesis; GMP from XMP (L-Gln route): step 1/1.</text>
</comment>
<comment type="subunit">
    <text evidence="1">Homodimer.</text>
</comment>
<gene>
    <name evidence="1" type="primary">guaA</name>
    <name type="ordered locus">BRA0361</name>
    <name type="ordered locus">BS1330_II0358</name>
</gene>
<sequence length="520" mass="57069">MSTTAYPDTILIIDFGSQVTQLIARRVREANVYCEIVPFQSADEAFKRLQPKGVILSGSPHSTTDIGSPRAPQAIFDAGIPVLGICYGEQTMCAQLGGNVESGHDREFGRAFLDVQEDSPLFAGIWAKGTRHQVWMSHGDRVTSLPDGFTIIGTSPNAPYAVIADEKRKYYGVQFHPEVVHTPDGAKLLQNFVHRIVGVKPGWTMGAYREQAVEAIRKQVGSGKVICALSGGVDSSVAALLAHEAVGDQLTCILVDHGLMRKDEAQQVVEMFREHYNLPLILVDASDRFIGALEGESDPEKKRKTIGRLFIEVFEEEARKLGGADFLVQGTLYPDVIESVSFTGGPSVTIKSHHNVGGLPERMKMQLVEPLRELFKDEVRLLGKELGLPDSFIGRHPFPGPGLAIRCPGGVTRGKLEILREADAIYLDEIRKAGLYDAIWQAFAVLLPVQTVGVMGDGRTYEFVCALRAVTSVDGMTADFYHYDMNFLGNAATRIINEVRGINRVVYDVTSKPPGTIEWE</sequence>
<accession>Q8FWT4</accession>
<accession>G0KCA0</accession>
<dbReference type="EC" id="6.3.5.2" evidence="1"/>
<dbReference type="EMBL" id="AE014292">
    <property type="protein sequence ID" value="AAN33559.1"/>
    <property type="molecule type" value="Genomic_DNA"/>
</dbReference>
<dbReference type="EMBL" id="CP002998">
    <property type="protein sequence ID" value="AEM19838.1"/>
    <property type="molecule type" value="Genomic_DNA"/>
</dbReference>
<dbReference type="RefSeq" id="WP_004690106.1">
    <property type="nucleotide sequence ID" value="NZ_KN046805.1"/>
</dbReference>
<dbReference type="SMR" id="Q8FWT4"/>
<dbReference type="MEROPS" id="C26.957"/>
<dbReference type="GeneID" id="55592054"/>
<dbReference type="KEGG" id="bms:BRA0361"/>
<dbReference type="KEGG" id="bsi:BS1330_II0358"/>
<dbReference type="PATRIC" id="fig|204722.21.peg.141"/>
<dbReference type="HOGENOM" id="CLU_014340_0_5_5"/>
<dbReference type="PhylomeDB" id="Q8FWT4"/>
<dbReference type="UniPathway" id="UPA00189">
    <property type="reaction ID" value="UER00296"/>
</dbReference>
<dbReference type="Proteomes" id="UP000007104">
    <property type="component" value="Chromosome II"/>
</dbReference>
<dbReference type="GO" id="GO:0005829">
    <property type="term" value="C:cytosol"/>
    <property type="evidence" value="ECO:0007669"/>
    <property type="project" value="TreeGrafter"/>
</dbReference>
<dbReference type="GO" id="GO:0005524">
    <property type="term" value="F:ATP binding"/>
    <property type="evidence" value="ECO:0007669"/>
    <property type="project" value="UniProtKB-UniRule"/>
</dbReference>
<dbReference type="GO" id="GO:0003921">
    <property type="term" value="F:GMP synthase activity"/>
    <property type="evidence" value="ECO:0007669"/>
    <property type="project" value="InterPro"/>
</dbReference>
<dbReference type="CDD" id="cd01742">
    <property type="entry name" value="GATase1_GMP_Synthase"/>
    <property type="match status" value="1"/>
</dbReference>
<dbReference type="CDD" id="cd01997">
    <property type="entry name" value="GMP_synthase_C"/>
    <property type="match status" value="1"/>
</dbReference>
<dbReference type="FunFam" id="3.30.300.10:FF:000002">
    <property type="entry name" value="GMP synthase [glutamine-hydrolyzing]"/>
    <property type="match status" value="1"/>
</dbReference>
<dbReference type="FunFam" id="3.40.50.620:FF:000001">
    <property type="entry name" value="GMP synthase [glutamine-hydrolyzing]"/>
    <property type="match status" value="1"/>
</dbReference>
<dbReference type="FunFam" id="3.40.50.880:FF:000001">
    <property type="entry name" value="GMP synthase [glutamine-hydrolyzing]"/>
    <property type="match status" value="1"/>
</dbReference>
<dbReference type="Gene3D" id="3.30.300.10">
    <property type="match status" value="1"/>
</dbReference>
<dbReference type="Gene3D" id="3.40.50.880">
    <property type="match status" value="1"/>
</dbReference>
<dbReference type="Gene3D" id="3.40.50.620">
    <property type="entry name" value="HUPs"/>
    <property type="match status" value="1"/>
</dbReference>
<dbReference type="HAMAP" id="MF_00344">
    <property type="entry name" value="GMP_synthase"/>
    <property type="match status" value="1"/>
</dbReference>
<dbReference type="InterPro" id="IPR029062">
    <property type="entry name" value="Class_I_gatase-like"/>
</dbReference>
<dbReference type="InterPro" id="IPR017926">
    <property type="entry name" value="GATASE"/>
</dbReference>
<dbReference type="InterPro" id="IPR001674">
    <property type="entry name" value="GMP_synth_C"/>
</dbReference>
<dbReference type="InterPro" id="IPR004739">
    <property type="entry name" value="GMP_synth_GATase"/>
</dbReference>
<dbReference type="InterPro" id="IPR022955">
    <property type="entry name" value="GMP_synthase"/>
</dbReference>
<dbReference type="InterPro" id="IPR025777">
    <property type="entry name" value="GMPS_ATP_PPase_dom"/>
</dbReference>
<dbReference type="InterPro" id="IPR022310">
    <property type="entry name" value="NAD/GMP_synthase"/>
</dbReference>
<dbReference type="InterPro" id="IPR014729">
    <property type="entry name" value="Rossmann-like_a/b/a_fold"/>
</dbReference>
<dbReference type="NCBIfam" id="TIGR00884">
    <property type="entry name" value="guaA_Cterm"/>
    <property type="match status" value="1"/>
</dbReference>
<dbReference type="NCBIfam" id="TIGR00888">
    <property type="entry name" value="guaA_Nterm"/>
    <property type="match status" value="1"/>
</dbReference>
<dbReference type="NCBIfam" id="NF000848">
    <property type="entry name" value="PRK00074.1"/>
    <property type="match status" value="1"/>
</dbReference>
<dbReference type="PANTHER" id="PTHR11922:SF2">
    <property type="entry name" value="GMP SYNTHASE [GLUTAMINE-HYDROLYZING]"/>
    <property type="match status" value="1"/>
</dbReference>
<dbReference type="PANTHER" id="PTHR11922">
    <property type="entry name" value="GMP SYNTHASE-RELATED"/>
    <property type="match status" value="1"/>
</dbReference>
<dbReference type="Pfam" id="PF00117">
    <property type="entry name" value="GATase"/>
    <property type="match status" value="1"/>
</dbReference>
<dbReference type="Pfam" id="PF00958">
    <property type="entry name" value="GMP_synt_C"/>
    <property type="match status" value="1"/>
</dbReference>
<dbReference type="Pfam" id="PF02540">
    <property type="entry name" value="NAD_synthase"/>
    <property type="match status" value="1"/>
</dbReference>
<dbReference type="PRINTS" id="PR00097">
    <property type="entry name" value="ANTSNTHASEII"/>
</dbReference>
<dbReference type="PRINTS" id="PR00096">
    <property type="entry name" value="GATASE"/>
</dbReference>
<dbReference type="SUPFAM" id="SSF52402">
    <property type="entry name" value="Adenine nucleotide alpha hydrolases-like"/>
    <property type="match status" value="1"/>
</dbReference>
<dbReference type="SUPFAM" id="SSF52317">
    <property type="entry name" value="Class I glutamine amidotransferase-like"/>
    <property type="match status" value="1"/>
</dbReference>
<dbReference type="SUPFAM" id="SSF54810">
    <property type="entry name" value="GMP synthetase C-terminal dimerisation domain"/>
    <property type="match status" value="1"/>
</dbReference>
<dbReference type="PROSITE" id="PS51273">
    <property type="entry name" value="GATASE_TYPE_1"/>
    <property type="match status" value="1"/>
</dbReference>
<dbReference type="PROSITE" id="PS51553">
    <property type="entry name" value="GMPS_ATP_PPASE"/>
    <property type="match status" value="1"/>
</dbReference>
<organism>
    <name type="scientific">Brucella suis biovar 1 (strain 1330)</name>
    <dbReference type="NCBI Taxonomy" id="204722"/>
    <lineage>
        <taxon>Bacteria</taxon>
        <taxon>Pseudomonadati</taxon>
        <taxon>Pseudomonadota</taxon>
        <taxon>Alphaproteobacteria</taxon>
        <taxon>Hyphomicrobiales</taxon>
        <taxon>Brucellaceae</taxon>
        <taxon>Brucella/Ochrobactrum group</taxon>
        <taxon>Brucella</taxon>
    </lineage>
</organism>
<proteinExistence type="inferred from homology"/>
<reference key="1">
    <citation type="journal article" date="2002" name="Proc. Natl. Acad. Sci. U.S.A.">
        <title>The Brucella suis genome reveals fundamental similarities between animal and plant pathogens and symbionts.</title>
        <authorList>
            <person name="Paulsen I.T."/>
            <person name="Seshadri R."/>
            <person name="Nelson K.E."/>
            <person name="Eisen J.A."/>
            <person name="Heidelberg J.F."/>
            <person name="Read T.D."/>
            <person name="Dodson R.J."/>
            <person name="Umayam L.A."/>
            <person name="Brinkac L.M."/>
            <person name="Beanan M.J."/>
            <person name="Daugherty S.C."/>
            <person name="DeBoy R.T."/>
            <person name="Durkin A.S."/>
            <person name="Kolonay J.F."/>
            <person name="Madupu R."/>
            <person name="Nelson W.C."/>
            <person name="Ayodeji B."/>
            <person name="Kraul M."/>
            <person name="Shetty J."/>
            <person name="Malek J.A."/>
            <person name="Van Aken S.E."/>
            <person name="Riedmuller S."/>
            <person name="Tettelin H."/>
            <person name="Gill S.R."/>
            <person name="White O."/>
            <person name="Salzberg S.L."/>
            <person name="Hoover D.L."/>
            <person name="Lindler L.E."/>
            <person name="Halling S.M."/>
            <person name="Boyle S.M."/>
            <person name="Fraser C.M."/>
        </authorList>
    </citation>
    <scope>NUCLEOTIDE SEQUENCE [LARGE SCALE GENOMIC DNA]</scope>
    <source>
        <strain>1330</strain>
    </source>
</reference>
<reference key="2">
    <citation type="journal article" date="2011" name="J. Bacteriol.">
        <title>Revised genome sequence of Brucella suis 1330.</title>
        <authorList>
            <person name="Tae H."/>
            <person name="Shallom S."/>
            <person name="Settlage R."/>
            <person name="Preston D."/>
            <person name="Adams L.G."/>
            <person name="Garner H.R."/>
        </authorList>
    </citation>
    <scope>NUCLEOTIDE SEQUENCE [LARGE SCALE GENOMIC DNA]</scope>
    <source>
        <strain>1330</strain>
    </source>
</reference>
<name>GUAA_BRUSU</name>
<evidence type="ECO:0000255" key="1">
    <source>
        <dbReference type="HAMAP-Rule" id="MF_00344"/>
    </source>
</evidence>
<feature type="chain" id="PRO_0000140104" description="GMP synthase [glutamine-hydrolyzing]">
    <location>
        <begin position="1"/>
        <end position="520"/>
    </location>
</feature>
<feature type="domain" description="Glutamine amidotransferase type-1" evidence="1">
    <location>
        <begin position="9"/>
        <end position="202"/>
    </location>
</feature>
<feature type="domain" description="GMPS ATP-PPase" evidence="1">
    <location>
        <begin position="203"/>
        <end position="395"/>
    </location>
</feature>
<feature type="active site" description="Nucleophile" evidence="1">
    <location>
        <position position="86"/>
    </location>
</feature>
<feature type="active site" evidence="1">
    <location>
        <position position="176"/>
    </location>
</feature>
<feature type="active site" evidence="1">
    <location>
        <position position="178"/>
    </location>
</feature>
<feature type="binding site" evidence="1">
    <location>
        <begin position="230"/>
        <end position="236"/>
    </location>
    <ligand>
        <name>ATP</name>
        <dbReference type="ChEBI" id="CHEBI:30616"/>
    </ligand>
</feature>
<keyword id="KW-0067">ATP-binding</keyword>
<keyword id="KW-0315">Glutamine amidotransferase</keyword>
<keyword id="KW-0332">GMP biosynthesis</keyword>
<keyword id="KW-0436">Ligase</keyword>
<keyword id="KW-0547">Nucleotide-binding</keyword>
<keyword id="KW-0658">Purine biosynthesis</keyword>
<protein>
    <recommendedName>
        <fullName evidence="1">GMP synthase [glutamine-hydrolyzing]</fullName>
        <ecNumber evidence="1">6.3.5.2</ecNumber>
    </recommendedName>
    <alternativeName>
        <fullName evidence="1">GMP synthetase</fullName>
    </alternativeName>
    <alternativeName>
        <fullName evidence="1">Glutamine amidotransferase</fullName>
    </alternativeName>
</protein>